<proteinExistence type="predicted"/>
<protein>
    <recommendedName>
        <fullName>Putative ankyrin repeat protein R875</fullName>
    </recommendedName>
</protein>
<reference key="1">
    <citation type="journal article" date="2004" name="Science">
        <title>The 1.2-megabase genome sequence of Mimivirus.</title>
        <authorList>
            <person name="Raoult D."/>
            <person name="Audic S."/>
            <person name="Robert C."/>
            <person name="Abergel C."/>
            <person name="Renesto P."/>
            <person name="Ogata H."/>
            <person name="La Scola B."/>
            <person name="Susan M."/>
            <person name="Claverie J.-M."/>
        </authorList>
    </citation>
    <scope>NUCLEOTIDE SEQUENCE [LARGE SCALE GENOMIC DNA]</scope>
    <source>
        <strain>Rowbotham-Bradford</strain>
    </source>
</reference>
<feature type="chain" id="PRO_0000067221" description="Putative ankyrin repeat protein R875">
    <location>
        <begin position="1"/>
        <end position="197"/>
    </location>
</feature>
<feature type="repeat" description="ANK 1">
    <location>
        <begin position="78"/>
        <end position="106"/>
    </location>
</feature>
<feature type="repeat" description="ANK 2">
    <location>
        <begin position="107"/>
        <end position="136"/>
    </location>
</feature>
<feature type="repeat" description="ANK 3">
    <location>
        <begin position="138"/>
        <end position="166"/>
    </location>
</feature>
<feature type="repeat" description="ANK 4">
    <location>
        <begin position="168"/>
        <end position="196"/>
    </location>
</feature>
<sequence>MYDKLPPELWVKIVDYSREINLLLVNKNFFELFNLVDIEIDIIDYVIENNLICVLNFIVALKKLEHPIIDKIVVTDLLNKCLIGYCISGRLDIVKYLVILGADIRENDDCVVRTACHNGHIEVVKYLVNQGADIRAYDDDAIRLASKNGHLYVVKYLVSQGVNFRKYNDYEINWASQNGHGSVVDFLVSKGAVLHEK</sequence>
<name>YR875_MIMIV</name>
<keyword id="KW-0040">ANK repeat</keyword>
<keyword id="KW-1185">Reference proteome</keyword>
<keyword id="KW-0677">Repeat</keyword>
<organism>
    <name type="scientific">Acanthamoeba polyphaga mimivirus</name>
    <name type="common">APMV</name>
    <dbReference type="NCBI Taxonomy" id="212035"/>
    <lineage>
        <taxon>Viruses</taxon>
        <taxon>Varidnaviria</taxon>
        <taxon>Bamfordvirae</taxon>
        <taxon>Nucleocytoviricota</taxon>
        <taxon>Megaviricetes</taxon>
        <taxon>Imitervirales</taxon>
        <taxon>Mimiviridae</taxon>
        <taxon>Megamimivirinae</taxon>
        <taxon>Mimivirus</taxon>
        <taxon>Mimivirus bradfordmassiliense</taxon>
    </lineage>
</organism>
<organismHost>
    <name type="scientific">Acanthamoeba polyphaga</name>
    <name type="common">Amoeba</name>
    <dbReference type="NCBI Taxonomy" id="5757"/>
</organismHost>
<accession>Q5URA9</accession>
<gene>
    <name type="ordered locus">MIMI_R875</name>
</gene>
<dbReference type="EMBL" id="AY653733">
    <property type="protein sequence ID" value="AAV51133.1"/>
    <property type="molecule type" value="Genomic_DNA"/>
</dbReference>
<dbReference type="SMR" id="Q5URA9"/>
<dbReference type="KEGG" id="vg:9925542"/>
<dbReference type="OrthoDB" id="38654at10239"/>
<dbReference type="Proteomes" id="UP000001134">
    <property type="component" value="Genome"/>
</dbReference>
<dbReference type="Gene3D" id="1.25.40.20">
    <property type="entry name" value="Ankyrin repeat-containing domain"/>
    <property type="match status" value="1"/>
</dbReference>
<dbReference type="InterPro" id="IPR002110">
    <property type="entry name" value="Ankyrin_rpt"/>
</dbReference>
<dbReference type="InterPro" id="IPR036770">
    <property type="entry name" value="Ankyrin_rpt-contain_sf"/>
</dbReference>
<dbReference type="PANTHER" id="PTHR44207:SF1">
    <property type="entry name" value="SURFACE ANTIGEN BSPA-LIKE"/>
    <property type="match status" value="1"/>
</dbReference>
<dbReference type="PANTHER" id="PTHR44207">
    <property type="entry name" value="SURFACE ANTIGEN BSPA-LIKE-RELATED"/>
    <property type="match status" value="1"/>
</dbReference>
<dbReference type="Pfam" id="PF12796">
    <property type="entry name" value="Ank_2"/>
    <property type="match status" value="1"/>
</dbReference>
<dbReference type="SMART" id="SM00248">
    <property type="entry name" value="ANK"/>
    <property type="match status" value="4"/>
</dbReference>
<dbReference type="SUPFAM" id="SSF48403">
    <property type="entry name" value="Ankyrin repeat"/>
    <property type="match status" value="1"/>
</dbReference>
<dbReference type="PROSITE" id="PS50297">
    <property type="entry name" value="ANK_REP_REGION"/>
    <property type="match status" value="1"/>
</dbReference>
<dbReference type="PROSITE" id="PS50088">
    <property type="entry name" value="ANK_REPEAT"/>
    <property type="match status" value="1"/>
</dbReference>